<keyword id="KW-0067">ATP-binding</keyword>
<keyword id="KW-0460">Magnesium</keyword>
<keyword id="KW-0547">Nucleotide-binding</keyword>
<keyword id="KW-1185">Reference proteome</keyword>
<keyword id="KW-0808">Transferase</keyword>
<keyword id="KW-0819">tRNA processing</keyword>
<protein>
    <recommendedName>
        <fullName evidence="1">tRNA dimethylallyltransferase</fullName>
        <ecNumber evidence="1">2.5.1.75</ecNumber>
    </recommendedName>
    <alternativeName>
        <fullName evidence="1">Dimethylallyl diphosphate:tRNA dimethylallyltransferase</fullName>
        <shortName evidence="1">DMAPP:tRNA dimethylallyltransferase</shortName>
        <shortName evidence="1">DMATase</shortName>
    </alternativeName>
    <alternativeName>
        <fullName evidence="1">Isopentenyl-diphosphate:tRNA isopentenyltransferase</fullName>
        <shortName evidence="1">IPP transferase</shortName>
        <shortName evidence="1">IPPT</shortName>
        <shortName evidence="1">IPTase</shortName>
    </alternativeName>
</protein>
<comment type="function">
    <text evidence="1">Catalyzes the transfer of a dimethylallyl group onto the adenine at position 37 in tRNAs that read codons beginning with uridine, leading to the formation of N6-(dimethylallyl)adenosine (i(6)A).</text>
</comment>
<comment type="catalytic activity">
    <reaction evidence="1">
        <text>adenosine(37) in tRNA + dimethylallyl diphosphate = N(6)-dimethylallyladenosine(37) in tRNA + diphosphate</text>
        <dbReference type="Rhea" id="RHEA:26482"/>
        <dbReference type="Rhea" id="RHEA-COMP:10162"/>
        <dbReference type="Rhea" id="RHEA-COMP:10375"/>
        <dbReference type="ChEBI" id="CHEBI:33019"/>
        <dbReference type="ChEBI" id="CHEBI:57623"/>
        <dbReference type="ChEBI" id="CHEBI:74411"/>
        <dbReference type="ChEBI" id="CHEBI:74415"/>
        <dbReference type="EC" id="2.5.1.75"/>
    </reaction>
</comment>
<comment type="cofactor">
    <cofactor evidence="1">
        <name>Mg(2+)</name>
        <dbReference type="ChEBI" id="CHEBI:18420"/>
    </cofactor>
</comment>
<comment type="subunit">
    <text evidence="1">Monomer.</text>
</comment>
<comment type="similarity">
    <text evidence="1">Belongs to the IPP transferase family.</text>
</comment>
<sequence>MSGKPPAIFLMGPTAAGKTDLAIELTTVLPCELISVDSALVYRGMDIGSAKPSKEVLAAHPHRLIDILDPAQSYSAAQFRADALEAMAEITARGKIPLLVGGTMLYYKALIDGLADMPAADATVRAELEAQAEALGLAELHRQLAEVDPESAARIHPNDPQRLIRALEVYRVSGESMTAHRRRQFAESRGADAGAGGHLPYTVASLAIAPTDRHILHQRIALRFSQMLEQGFVDEVRSLRARSDLHAGLPSIRAVGYRQVWDYLDGKLTENEMRERGIIATRQLAKRQFTWLRGWPEVHWLDSLACDNLSRTLKYLGAISILS</sequence>
<reference key="1">
    <citation type="journal article" date="2002" name="Environ. Microbiol.">
        <title>Complete genome sequence and comparative analysis of the metabolically versatile Pseudomonas putida KT2440.</title>
        <authorList>
            <person name="Nelson K.E."/>
            <person name="Weinel C."/>
            <person name="Paulsen I.T."/>
            <person name="Dodson R.J."/>
            <person name="Hilbert H."/>
            <person name="Martins dos Santos V.A.P."/>
            <person name="Fouts D.E."/>
            <person name="Gill S.R."/>
            <person name="Pop M."/>
            <person name="Holmes M."/>
            <person name="Brinkac L.M."/>
            <person name="Beanan M.J."/>
            <person name="DeBoy R.T."/>
            <person name="Daugherty S.C."/>
            <person name="Kolonay J.F."/>
            <person name="Madupu R."/>
            <person name="Nelson W.C."/>
            <person name="White O."/>
            <person name="Peterson J.D."/>
            <person name="Khouri H.M."/>
            <person name="Hance I."/>
            <person name="Chris Lee P."/>
            <person name="Holtzapple E.K."/>
            <person name="Scanlan D."/>
            <person name="Tran K."/>
            <person name="Moazzez A."/>
            <person name="Utterback T.R."/>
            <person name="Rizzo M."/>
            <person name="Lee K."/>
            <person name="Kosack D."/>
            <person name="Moestl D."/>
            <person name="Wedler H."/>
            <person name="Lauber J."/>
            <person name="Stjepandic D."/>
            <person name="Hoheisel J."/>
            <person name="Straetz M."/>
            <person name="Heim S."/>
            <person name="Kiewitz C."/>
            <person name="Eisen J.A."/>
            <person name="Timmis K.N."/>
            <person name="Duesterhoeft A."/>
            <person name="Tuemmler B."/>
            <person name="Fraser C.M."/>
        </authorList>
    </citation>
    <scope>NUCLEOTIDE SEQUENCE [LARGE SCALE GENOMIC DNA]</scope>
    <source>
        <strain>ATCC 47054 / DSM 6125 / CFBP 8728 / NCIMB 11950 / KT2440</strain>
    </source>
</reference>
<dbReference type="EC" id="2.5.1.75" evidence="1"/>
<dbReference type="EMBL" id="AE015451">
    <property type="protein sequence ID" value="AAN70462.1"/>
    <property type="molecule type" value="Genomic_DNA"/>
</dbReference>
<dbReference type="RefSeq" id="NP_746998.1">
    <property type="nucleotide sequence ID" value="NC_002947.4"/>
</dbReference>
<dbReference type="RefSeq" id="WP_010955483.1">
    <property type="nucleotide sequence ID" value="NZ_CP169744.1"/>
</dbReference>
<dbReference type="SMR" id="Q88DD2"/>
<dbReference type="STRING" id="160488.PP_4895"/>
<dbReference type="PaxDb" id="160488-PP_4895"/>
<dbReference type="GeneID" id="83682627"/>
<dbReference type="KEGG" id="ppu:PP_4895"/>
<dbReference type="PATRIC" id="fig|160488.4.peg.5230"/>
<dbReference type="eggNOG" id="COG0324">
    <property type="taxonomic scope" value="Bacteria"/>
</dbReference>
<dbReference type="HOGENOM" id="CLU_032616_0_0_6"/>
<dbReference type="OrthoDB" id="9776390at2"/>
<dbReference type="PhylomeDB" id="Q88DD2"/>
<dbReference type="BioCyc" id="PPUT160488:G1G01-5237-MONOMER"/>
<dbReference type="Proteomes" id="UP000000556">
    <property type="component" value="Chromosome"/>
</dbReference>
<dbReference type="GO" id="GO:0005524">
    <property type="term" value="F:ATP binding"/>
    <property type="evidence" value="ECO:0007669"/>
    <property type="project" value="UniProtKB-UniRule"/>
</dbReference>
<dbReference type="GO" id="GO:0052381">
    <property type="term" value="F:tRNA dimethylallyltransferase activity"/>
    <property type="evidence" value="ECO:0007669"/>
    <property type="project" value="UniProtKB-UniRule"/>
</dbReference>
<dbReference type="GO" id="GO:0006400">
    <property type="term" value="P:tRNA modification"/>
    <property type="evidence" value="ECO:0007669"/>
    <property type="project" value="TreeGrafter"/>
</dbReference>
<dbReference type="FunFam" id="1.10.20.140:FF:000001">
    <property type="entry name" value="tRNA dimethylallyltransferase"/>
    <property type="match status" value="1"/>
</dbReference>
<dbReference type="Gene3D" id="1.10.20.140">
    <property type="match status" value="1"/>
</dbReference>
<dbReference type="Gene3D" id="3.40.50.300">
    <property type="entry name" value="P-loop containing nucleotide triphosphate hydrolases"/>
    <property type="match status" value="1"/>
</dbReference>
<dbReference type="HAMAP" id="MF_00185">
    <property type="entry name" value="IPP_trans"/>
    <property type="match status" value="1"/>
</dbReference>
<dbReference type="InterPro" id="IPR039657">
    <property type="entry name" value="Dimethylallyltransferase"/>
</dbReference>
<dbReference type="InterPro" id="IPR018022">
    <property type="entry name" value="IPT"/>
</dbReference>
<dbReference type="InterPro" id="IPR027417">
    <property type="entry name" value="P-loop_NTPase"/>
</dbReference>
<dbReference type="NCBIfam" id="TIGR00174">
    <property type="entry name" value="miaA"/>
    <property type="match status" value="1"/>
</dbReference>
<dbReference type="PANTHER" id="PTHR11088">
    <property type="entry name" value="TRNA DIMETHYLALLYLTRANSFERASE"/>
    <property type="match status" value="1"/>
</dbReference>
<dbReference type="PANTHER" id="PTHR11088:SF60">
    <property type="entry name" value="TRNA DIMETHYLALLYLTRANSFERASE"/>
    <property type="match status" value="1"/>
</dbReference>
<dbReference type="Pfam" id="PF01715">
    <property type="entry name" value="IPPT"/>
    <property type="match status" value="1"/>
</dbReference>
<dbReference type="SUPFAM" id="SSF52540">
    <property type="entry name" value="P-loop containing nucleoside triphosphate hydrolases"/>
    <property type="match status" value="1"/>
</dbReference>
<feature type="chain" id="PRO_0000163958" description="tRNA dimethylallyltransferase">
    <location>
        <begin position="1"/>
        <end position="323"/>
    </location>
</feature>
<feature type="region of interest" description="Interaction with substrate tRNA" evidence="1">
    <location>
        <begin position="37"/>
        <end position="40"/>
    </location>
</feature>
<feature type="region of interest" description="Interaction with substrate tRNA" evidence="1">
    <location>
        <begin position="161"/>
        <end position="165"/>
    </location>
</feature>
<feature type="binding site" evidence="1">
    <location>
        <begin position="12"/>
        <end position="19"/>
    </location>
    <ligand>
        <name>ATP</name>
        <dbReference type="ChEBI" id="CHEBI:30616"/>
    </ligand>
</feature>
<feature type="binding site" evidence="1">
    <location>
        <begin position="14"/>
        <end position="19"/>
    </location>
    <ligand>
        <name>substrate</name>
    </ligand>
</feature>
<feature type="site" description="Interaction with substrate tRNA" evidence="1">
    <location>
        <position position="103"/>
    </location>
</feature>
<feature type="site" description="Interaction with substrate tRNA" evidence="1">
    <location>
        <position position="125"/>
    </location>
</feature>
<gene>
    <name evidence="1" type="primary">miaA</name>
    <name type="ordered locus">PP_4895</name>
</gene>
<proteinExistence type="inferred from homology"/>
<evidence type="ECO:0000255" key="1">
    <source>
        <dbReference type="HAMAP-Rule" id="MF_00185"/>
    </source>
</evidence>
<name>MIAA_PSEPK</name>
<organism>
    <name type="scientific">Pseudomonas putida (strain ATCC 47054 / DSM 6125 / CFBP 8728 / NCIMB 11950 / KT2440)</name>
    <dbReference type="NCBI Taxonomy" id="160488"/>
    <lineage>
        <taxon>Bacteria</taxon>
        <taxon>Pseudomonadati</taxon>
        <taxon>Pseudomonadota</taxon>
        <taxon>Gammaproteobacteria</taxon>
        <taxon>Pseudomonadales</taxon>
        <taxon>Pseudomonadaceae</taxon>
        <taxon>Pseudomonas</taxon>
    </lineage>
</organism>
<accession>Q88DD2</accession>